<gene>
    <name evidence="1" type="primary">rpsE</name>
    <name evidence="1" type="synonym">rps5</name>
    <name type="ordered locus">cce_4031</name>
</gene>
<proteinExistence type="inferred from homology"/>
<reference key="1">
    <citation type="journal article" date="2008" name="Proc. Natl. Acad. Sci. U.S.A.">
        <title>The genome of Cyanothece 51142, a unicellular diazotrophic cyanobacterium important in the marine nitrogen cycle.</title>
        <authorList>
            <person name="Welsh E.A."/>
            <person name="Liberton M."/>
            <person name="Stoeckel J."/>
            <person name="Loh T."/>
            <person name="Elvitigala T."/>
            <person name="Wang C."/>
            <person name="Wollam A."/>
            <person name="Fulton R.S."/>
            <person name="Clifton S.W."/>
            <person name="Jacobs J.M."/>
            <person name="Aurora R."/>
            <person name="Ghosh B.K."/>
            <person name="Sherman L.A."/>
            <person name="Smith R.D."/>
            <person name="Wilson R.K."/>
            <person name="Pakrasi H.B."/>
        </authorList>
    </citation>
    <scope>NUCLEOTIDE SEQUENCE [LARGE SCALE GENOMIC DNA]</scope>
    <source>
        <strain>ATCC 51142 / BH68</strain>
    </source>
</reference>
<organism>
    <name type="scientific">Crocosphaera subtropica (strain ATCC 51142 / BH68)</name>
    <name type="common">Cyanothece sp. (strain ATCC 51142)</name>
    <dbReference type="NCBI Taxonomy" id="43989"/>
    <lineage>
        <taxon>Bacteria</taxon>
        <taxon>Bacillati</taxon>
        <taxon>Cyanobacteriota</taxon>
        <taxon>Cyanophyceae</taxon>
        <taxon>Oscillatoriophycideae</taxon>
        <taxon>Chroococcales</taxon>
        <taxon>Aphanothecaceae</taxon>
        <taxon>Crocosphaera</taxon>
        <taxon>Crocosphaera subtropica</taxon>
    </lineage>
</organism>
<feature type="chain" id="PRO_1000165449" description="Small ribosomal subunit protein uS5">
    <location>
        <begin position="1"/>
        <end position="173"/>
    </location>
</feature>
<feature type="domain" description="S5 DRBM" evidence="1">
    <location>
        <begin position="17"/>
        <end position="80"/>
    </location>
</feature>
<name>RS5_CROS5</name>
<keyword id="KW-1185">Reference proteome</keyword>
<keyword id="KW-0687">Ribonucleoprotein</keyword>
<keyword id="KW-0689">Ribosomal protein</keyword>
<keyword id="KW-0694">RNA-binding</keyword>
<keyword id="KW-0699">rRNA-binding</keyword>
<protein>
    <recommendedName>
        <fullName evidence="1">Small ribosomal subunit protein uS5</fullName>
    </recommendedName>
    <alternativeName>
        <fullName evidence="2">30S ribosomal protein S5</fullName>
    </alternativeName>
</protein>
<dbReference type="EMBL" id="CP000806">
    <property type="protein sequence ID" value="ACB53379.1"/>
    <property type="molecule type" value="Genomic_DNA"/>
</dbReference>
<dbReference type="RefSeq" id="WP_009543881.1">
    <property type="nucleotide sequence ID" value="NC_010546.1"/>
</dbReference>
<dbReference type="SMR" id="B1WQS7"/>
<dbReference type="STRING" id="43989.cce_4031"/>
<dbReference type="KEGG" id="cyt:cce_4031"/>
<dbReference type="eggNOG" id="COG0098">
    <property type="taxonomic scope" value="Bacteria"/>
</dbReference>
<dbReference type="HOGENOM" id="CLU_065898_2_2_3"/>
<dbReference type="OrthoDB" id="9809045at2"/>
<dbReference type="Proteomes" id="UP000001203">
    <property type="component" value="Chromosome circular"/>
</dbReference>
<dbReference type="GO" id="GO:0015935">
    <property type="term" value="C:small ribosomal subunit"/>
    <property type="evidence" value="ECO:0007669"/>
    <property type="project" value="InterPro"/>
</dbReference>
<dbReference type="GO" id="GO:0019843">
    <property type="term" value="F:rRNA binding"/>
    <property type="evidence" value="ECO:0007669"/>
    <property type="project" value="UniProtKB-UniRule"/>
</dbReference>
<dbReference type="GO" id="GO:0003735">
    <property type="term" value="F:structural constituent of ribosome"/>
    <property type="evidence" value="ECO:0007669"/>
    <property type="project" value="InterPro"/>
</dbReference>
<dbReference type="GO" id="GO:0006412">
    <property type="term" value="P:translation"/>
    <property type="evidence" value="ECO:0007669"/>
    <property type="project" value="UniProtKB-UniRule"/>
</dbReference>
<dbReference type="FunFam" id="3.30.160.20:FF:000001">
    <property type="entry name" value="30S ribosomal protein S5"/>
    <property type="match status" value="1"/>
</dbReference>
<dbReference type="FunFam" id="3.30.230.10:FF:000002">
    <property type="entry name" value="30S ribosomal protein S5"/>
    <property type="match status" value="1"/>
</dbReference>
<dbReference type="Gene3D" id="3.30.160.20">
    <property type="match status" value="1"/>
</dbReference>
<dbReference type="Gene3D" id="3.30.230.10">
    <property type="match status" value="1"/>
</dbReference>
<dbReference type="HAMAP" id="MF_01307_B">
    <property type="entry name" value="Ribosomal_uS5_B"/>
    <property type="match status" value="1"/>
</dbReference>
<dbReference type="InterPro" id="IPR020568">
    <property type="entry name" value="Ribosomal_Su5_D2-typ_SF"/>
</dbReference>
<dbReference type="InterPro" id="IPR000851">
    <property type="entry name" value="Ribosomal_uS5"/>
</dbReference>
<dbReference type="InterPro" id="IPR005712">
    <property type="entry name" value="Ribosomal_uS5_bac-type"/>
</dbReference>
<dbReference type="InterPro" id="IPR005324">
    <property type="entry name" value="Ribosomal_uS5_C"/>
</dbReference>
<dbReference type="InterPro" id="IPR013810">
    <property type="entry name" value="Ribosomal_uS5_N"/>
</dbReference>
<dbReference type="InterPro" id="IPR018192">
    <property type="entry name" value="Ribosomal_uS5_N_CS"/>
</dbReference>
<dbReference type="InterPro" id="IPR014721">
    <property type="entry name" value="Ribsml_uS5_D2-typ_fold_subgr"/>
</dbReference>
<dbReference type="NCBIfam" id="TIGR01021">
    <property type="entry name" value="rpsE_bact"/>
    <property type="match status" value="1"/>
</dbReference>
<dbReference type="PANTHER" id="PTHR48277">
    <property type="entry name" value="MITOCHONDRIAL RIBOSOMAL PROTEIN S5"/>
    <property type="match status" value="1"/>
</dbReference>
<dbReference type="PANTHER" id="PTHR48277:SF1">
    <property type="entry name" value="MITOCHONDRIAL RIBOSOMAL PROTEIN S5"/>
    <property type="match status" value="1"/>
</dbReference>
<dbReference type="Pfam" id="PF00333">
    <property type="entry name" value="Ribosomal_S5"/>
    <property type="match status" value="1"/>
</dbReference>
<dbReference type="Pfam" id="PF03719">
    <property type="entry name" value="Ribosomal_S5_C"/>
    <property type="match status" value="1"/>
</dbReference>
<dbReference type="SUPFAM" id="SSF54768">
    <property type="entry name" value="dsRNA-binding domain-like"/>
    <property type="match status" value="1"/>
</dbReference>
<dbReference type="SUPFAM" id="SSF54211">
    <property type="entry name" value="Ribosomal protein S5 domain 2-like"/>
    <property type="match status" value="1"/>
</dbReference>
<dbReference type="PROSITE" id="PS00585">
    <property type="entry name" value="RIBOSOMAL_S5"/>
    <property type="match status" value="1"/>
</dbReference>
<dbReference type="PROSITE" id="PS50881">
    <property type="entry name" value="S5_DSRBD"/>
    <property type="match status" value="1"/>
</dbReference>
<sequence>MAKSRKSNRDKSKDSNWQERVIQIRRVSKVVKGGKKLSFRAIVVVGNEKGQVGVGVGKAGDVIGAVRKGVADGKKQLIDVSLTKSSSITHVAKGVSGGAKVIVRPAAPGTGVIAGGAVRTVLELAGLKNILAKQLGSNNPLNNARAVINALEGLRTFSEVAQERGVPLEHLYT</sequence>
<evidence type="ECO:0000255" key="1">
    <source>
        <dbReference type="HAMAP-Rule" id="MF_01307"/>
    </source>
</evidence>
<evidence type="ECO:0000305" key="2"/>
<comment type="function">
    <text evidence="1">With S4 and S12 plays an important role in translational accuracy.</text>
</comment>
<comment type="function">
    <text evidence="1">Located at the back of the 30S subunit body where it stabilizes the conformation of the head with respect to the body.</text>
</comment>
<comment type="subunit">
    <text evidence="1">Part of the 30S ribosomal subunit. Contacts proteins S4 and S8.</text>
</comment>
<comment type="domain">
    <text>The N-terminal domain interacts with the head of the 30S subunit; the C-terminal domain interacts with the body and contacts protein S4. The interaction surface between S4 and S5 is involved in control of translational fidelity.</text>
</comment>
<comment type="similarity">
    <text evidence="1">Belongs to the universal ribosomal protein uS5 family.</text>
</comment>
<accession>B1WQS7</accession>